<reference key="1">
    <citation type="journal article" date="2001" name="Cancer Immun.">
        <title>Humoral immunity to human breast cancer: antigen definition and quantitative analysis of mRNA expression.</title>
        <authorList>
            <person name="Scanlan M.J."/>
            <person name="Gout I."/>
            <person name="Gordon C.M."/>
            <person name="Williamson B."/>
            <person name="Stockert E."/>
            <person name="Gure A.O."/>
            <person name="Jaeger D."/>
            <person name="Chen Y.-T."/>
            <person name="Mackay A."/>
            <person name="O'Hare M.J."/>
            <person name="Old L.J."/>
        </authorList>
    </citation>
    <scope>NUCLEOTIDE SEQUENCE [MRNA] (ISOFORM 1)</scope>
    <scope>TISSUE SPECIFICITY</scope>
    <source>
        <tissue>Mammary gland</tissue>
    </source>
</reference>
<reference key="2">
    <citation type="submission" date="2004-07" db="EMBL/GenBank/DDBJ databases">
        <title>Full-length cDNA libraries and normalization.</title>
        <authorList>
            <person name="Li W.B."/>
            <person name="Gruber C."/>
            <person name="Jessee J."/>
            <person name="Polayes D."/>
        </authorList>
    </citation>
    <scope>NUCLEOTIDE SEQUENCE [LARGE SCALE MRNA] (ISOFORM 2)</scope>
    <source>
        <tissue>Placenta</tissue>
    </source>
</reference>
<reference key="3">
    <citation type="journal article" date="2007" name="BMC Genomics">
        <title>The full-ORF clone resource of the German cDNA consortium.</title>
        <authorList>
            <person name="Bechtel S."/>
            <person name="Rosenfelder H."/>
            <person name="Duda A."/>
            <person name="Schmidt C.P."/>
            <person name="Ernst U."/>
            <person name="Wellenreuther R."/>
            <person name="Mehrle A."/>
            <person name="Schuster C."/>
            <person name="Bahr A."/>
            <person name="Bloecker H."/>
            <person name="Heubner D."/>
            <person name="Hoerlein A."/>
            <person name="Michel G."/>
            <person name="Wedler H."/>
            <person name="Koehrer K."/>
            <person name="Ottenwaelder B."/>
            <person name="Poustka A."/>
            <person name="Wiemann S."/>
            <person name="Schupp I."/>
        </authorList>
    </citation>
    <scope>NUCLEOTIDE SEQUENCE [LARGE SCALE MRNA] (ISOFORMS 3 AND 5)</scope>
    <source>
        <tissue>Prostate</tissue>
        <tissue>Uterine endothelium</tissue>
    </source>
</reference>
<reference key="4">
    <citation type="journal article" date="2006" name="Nature">
        <title>Analysis of the DNA sequence and duplication history of human chromosome 15.</title>
        <authorList>
            <person name="Zody M.C."/>
            <person name="Garber M."/>
            <person name="Sharpe T."/>
            <person name="Young S.K."/>
            <person name="Rowen L."/>
            <person name="O'Neill K."/>
            <person name="Whittaker C.A."/>
            <person name="Kamal M."/>
            <person name="Chang J.L."/>
            <person name="Cuomo C.A."/>
            <person name="Dewar K."/>
            <person name="FitzGerald M.G."/>
            <person name="Kodira C.D."/>
            <person name="Madan A."/>
            <person name="Qin S."/>
            <person name="Yang X."/>
            <person name="Abbasi N."/>
            <person name="Abouelleil A."/>
            <person name="Arachchi H.M."/>
            <person name="Baradarani L."/>
            <person name="Birditt B."/>
            <person name="Bloom S."/>
            <person name="Bloom T."/>
            <person name="Borowsky M.L."/>
            <person name="Burke J."/>
            <person name="Butler J."/>
            <person name="Cook A."/>
            <person name="DeArellano K."/>
            <person name="DeCaprio D."/>
            <person name="Dorris L. III"/>
            <person name="Dors M."/>
            <person name="Eichler E.E."/>
            <person name="Engels R."/>
            <person name="Fahey J."/>
            <person name="Fleetwood P."/>
            <person name="Friedman C."/>
            <person name="Gearin G."/>
            <person name="Hall J.L."/>
            <person name="Hensley G."/>
            <person name="Johnson E."/>
            <person name="Jones C."/>
            <person name="Kamat A."/>
            <person name="Kaur A."/>
            <person name="Locke D.P."/>
            <person name="Madan A."/>
            <person name="Munson G."/>
            <person name="Jaffe D.B."/>
            <person name="Lui A."/>
            <person name="Macdonald P."/>
            <person name="Mauceli E."/>
            <person name="Naylor J.W."/>
            <person name="Nesbitt R."/>
            <person name="Nicol R."/>
            <person name="O'Leary S.B."/>
            <person name="Ratcliffe A."/>
            <person name="Rounsley S."/>
            <person name="She X."/>
            <person name="Sneddon K.M.B."/>
            <person name="Stewart S."/>
            <person name="Sougnez C."/>
            <person name="Stone S.M."/>
            <person name="Topham K."/>
            <person name="Vincent D."/>
            <person name="Wang S."/>
            <person name="Zimmer A.R."/>
            <person name="Birren B.W."/>
            <person name="Hood L."/>
            <person name="Lander E.S."/>
            <person name="Nusbaum C."/>
        </authorList>
    </citation>
    <scope>NUCLEOTIDE SEQUENCE [LARGE SCALE GENOMIC DNA]</scope>
</reference>
<reference key="5">
    <citation type="submission" date="2005-07" db="EMBL/GenBank/DDBJ databases">
        <authorList>
            <person name="Mural R.J."/>
            <person name="Istrail S."/>
            <person name="Sutton G.G."/>
            <person name="Florea L."/>
            <person name="Halpern A.L."/>
            <person name="Mobarry C.M."/>
            <person name="Lippert R."/>
            <person name="Walenz B."/>
            <person name="Shatkay H."/>
            <person name="Dew I."/>
            <person name="Miller J.R."/>
            <person name="Flanigan M.J."/>
            <person name="Edwards N.J."/>
            <person name="Bolanos R."/>
            <person name="Fasulo D."/>
            <person name="Halldorsson B.V."/>
            <person name="Hannenhalli S."/>
            <person name="Turner R."/>
            <person name="Yooseph S."/>
            <person name="Lu F."/>
            <person name="Nusskern D.R."/>
            <person name="Shue B.C."/>
            <person name="Zheng X.H."/>
            <person name="Zhong F."/>
            <person name="Delcher A.L."/>
            <person name="Huson D.H."/>
            <person name="Kravitz S.A."/>
            <person name="Mouchard L."/>
            <person name="Reinert K."/>
            <person name="Remington K.A."/>
            <person name="Clark A.G."/>
            <person name="Waterman M.S."/>
            <person name="Eichler E.E."/>
            <person name="Adams M.D."/>
            <person name="Hunkapiller M.W."/>
            <person name="Myers E.W."/>
            <person name="Venter J.C."/>
        </authorList>
    </citation>
    <scope>NUCLEOTIDE SEQUENCE [LARGE SCALE GENOMIC DNA]</scope>
</reference>
<reference key="6">
    <citation type="journal article" date="2004" name="Genome Res.">
        <title>The status, quality, and expansion of the NIH full-length cDNA project: the Mammalian Gene Collection (MGC).</title>
        <authorList>
            <consortium name="The MGC Project Team"/>
        </authorList>
    </citation>
    <scope>NUCLEOTIDE SEQUENCE [LARGE SCALE MRNA] (ISOFORM 2)</scope>
    <source>
        <tissue>Colon</tissue>
    </source>
</reference>
<reference key="7">
    <citation type="journal article" date="2004" name="Nat. Genet.">
        <title>Complete sequencing and characterization of 21,243 full-length human cDNAs.</title>
        <authorList>
            <person name="Ota T."/>
            <person name="Suzuki Y."/>
            <person name="Nishikawa T."/>
            <person name="Otsuki T."/>
            <person name="Sugiyama T."/>
            <person name="Irie R."/>
            <person name="Wakamatsu A."/>
            <person name="Hayashi K."/>
            <person name="Sato H."/>
            <person name="Nagai K."/>
            <person name="Kimura K."/>
            <person name="Makita H."/>
            <person name="Sekine M."/>
            <person name="Obayashi M."/>
            <person name="Nishi T."/>
            <person name="Shibahara T."/>
            <person name="Tanaka T."/>
            <person name="Ishii S."/>
            <person name="Yamamoto J."/>
            <person name="Saito K."/>
            <person name="Kawai Y."/>
            <person name="Isono Y."/>
            <person name="Nakamura Y."/>
            <person name="Nagahari K."/>
            <person name="Murakami K."/>
            <person name="Yasuda T."/>
            <person name="Iwayanagi T."/>
            <person name="Wagatsuma M."/>
            <person name="Shiratori A."/>
            <person name="Sudo H."/>
            <person name="Hosoiri T."/>
            <person name="Kaku Y."/>
            <person name="Kodaira H."/>
            <person name="Kondo H."/>
            <person name="Sugawara M."/>
            <person name="Takahashi M."/>
            <person name="Kanda K."/>
            <person name="Yokoi T."/>
            <person name="Furuya T."/>
            <person name="Kikkawa E."/>
            <person name="Omura Y."/>
            <person name="Abe K."/>
            <person name="Kamihara K."/>
            <person name="Katsuta N."/>
            <person name="Sato K."/>
            <person name="Tanikawa M."/>
            <person name="Yamazaki M."/>
            <person name="Ninomiya K."/>
            <person name="Ishibashi T."/>
            <person name="Yamashita H."/>
            <person name="Murakawa K."/>
            <person name="Fujimori K."/>
            <person name="Tanai H."/>
            <person name="Kimata M."/>
            <person name="Watanabe M."/>
            <person name="Hiraoka S."/>
            <person name="Chiba Y."/>
            <person name="Ishida S."/>
            <person name="Ono Y."/>
            <person name="Takiguchi S."/>
            <person name="Watanabe S."/>
            <person name="Yosida M."/>
            <person name="Hotuta T."/>
            <person name="Kusano J."/>
            <person name="Kanehori K."/>
            <person name="Takahashi-Fujii A."/>
            <person name="Hara H."/>
            <person name="Tanase T.-O."/>
            <person name="Nomura Y."/>
            <person name="Togiya S."/>
            <person name="Komai F."/>
            <person name="Hara R."/>
            <person name="Takeuchi K."/>
            <person name="Arita M."/>
            <person name="Imose N."/>
            <person name="Musashino K."/>
            <person name="Yuuki H."/>
            <person name="Oshima A."/>
            <person name="Sasaki N."/>
            <person name="Aotsuka S."/>
            <person name="Yoshikawa Y."/>
            <person name="Matsunawa H."/>
            <person name="Ichihara T."/>
            <person name="Shiohata N."/>
            <person name="Sano S."/>
            <person name="Moriya S."/>
            <person name="Momiyama H."/>
            <person name="Satoh N."/>
            <person name="Takami S."/>
            <person name="Terashima Y."/>
            <person name="Suzuki O."/>
            <person name="Nakagawa S."/>
            <person name="Senoh A."/>
            <person name="Mizoguchi H."/>
            <person name="Goto Y."/>
            <person name="Shimizu F."/>
            <person name="Wakebe H."/>
            <person name="Hishigaki H."/>
            <person name="Watanabe T."/>
            <person name="Sugiyama A."/>
            <person name="Takemoto M."/>
            <person name="Kawakami B."/>
            <person name="Yamazaki M."/>
            <person name="Watanabe K."/>
            <person name="Kumagai A."/>
            <person name="Itakura S."/>
            <person name="Fukuzumi Y."/>
            <person name="Fujimori Y."/>
            <person name="Komiyama M."/>
            <person name="Tashiro H."/>
            <person name="Tanigami A."/>
            <person name="Fujiwara T."/>
            <person name="Ono T."/>
            <person name="Yamada K."/>
            <person name="Fujii Y."/>
            <person name="Ozaki K."/>
            <person name="Hirao M."/>
            <person name="Ohmori Y."/>
            <person name="Kawabata A."/>
            <person name="Hikiji T."/>
            <person name="Kobatake N."/>
            <person name="Inagaki H."/>
            <person name="Ikema Y."/>
            <person name="Okamoto S."/>
            <person name="Okitani R."/>
            <person name="Kawakami T."/>
            <person name="Noguchi S."/>
            <person name="Itoh T."/>
            <person name="Shigeta K."/>
            <person name="Senba T."/>
            <person name="Matsumura K."/>
            <person name="Nakajima Y."/>
            <person name="Mizuno T."/>
            <person name="Morinaga M."/>
            <person name="Sasaki M."/>
            <person name="Togashi T."/>
            <person name="Oyama M."/>
            <person name="Hata H."/>
            <person name="Watanabe M."/>
            <person name="Komatsu T."/>
            <person name="Mizushima-Sugano J."/>
            <person name="Satoh T."/>
            <person name="Shirai Y."/>
            <person name="Takahashi Y."/>
            <person name="Nakagawa K."/>
            <person name="Okumura K."/>
            <person name="Nagase T."/>
            <person name="Nomura N."/>
            <person name="Kikuchi H."/>
            <person name="Masuho Y."/>
            <person name="Yamashita R."/>
            <person name="Nakai K."/>
            <person name="Yada T."/>
            <person name="Nakamura Y."/>
            <person name="Ohara O."/>
            <person name="Isogai T."/>
            <person name="Sugano S."/>
        </authorList>
    </citation>
    <scope>NUCLEOTIDE SEQUENCE [LARGE SCALE MRNA] OF 16-196 (ISOFORM 1)</scope>
</reference>
<reference key="8">
    <citation type="journal article" date="2020" name="J. Biol. Chem.">
        <title>The small EF-hand protein CALML4 functions as a critical myosin light chain within the intermicrovillar adhesion complex.</title>
        <authorList>
            <person name="Choi M.S."/>
            <person name="Graves M.J."/>
            <person name="Matoo S."/>
            <person name="Storad Z.A."/>
            <person name="El Sheikh Idris R.A."/>
            <person name="Weck M.L."/>
            <person name="Smith Z.B."/>
            <person name="Tyska M.J."/>
            <person name="Crawley S.W."/>
        </authorList>
    </citation>
    <scope>FUNCTION</scope>
    <scope>TISSUE SPECIFICITY</scope>
    <scope>SUBCELLULAR LOCATION</scope>
    <scope>INTERACTION WITH MYO7B AND MYO7A</scope>
    <scope>ALTERNATIVE SPLICING</scope>
</reference>
<accession>Q96GE6</accession>
<accession>B4DL15</accession>
<accession>F8W6Y4</accession>
<accession>Q6MZY3</accession>
<accession>Q6N048</accession>
<accession>Q9H286</accession>
<keyword id="KW-0025">Alternative splicing</keyword>
<keyword id="KW-0966">Cell projection</keyword>
<keyword id="KW-1267">Proteomics identification</keyword>
<keyword id="KW-1185">Reference proteome</keyword>
<keyword id="KW-0677">Repeat</keyword>
<organism>
    <name type="scientific">Homo sapiens</name>
    <name type="common">Human</name>
    <dbReference type="NCBI Taxonomy" id="9606"/>
    <lineage>
        <taxon>Eukaryota</taxon>
        <taxon>Metazoa</taxon>
        <taxon>Chordata</taxon>
        <taxon>Craniata</taxon>
        <taxon>Vertebrata</taxon>
        <taxon>Euteleostomi</taxon>
        <taxon>Mammalia</taxon>
        <taxon>Eutheria</taxon>
        <taxon>Euarchontoglires</taxon>
        <taxon>Primates</taxon>
        <taxon>Haplorrhini</taxon>
        <taxon>Catarrhini</taxon>
        <taxon>Hominidae</taxon>
        <taxon>Homo</taxon>
    </lineage>
</organism>
<evidence type="ECO:0000255" key="1">
    <source>
        <dbReference type="PROSITE-ProRule" id="PRU00448"/>
    </source>
</evidence>
<evidence type="ECO:0000256" key="2">
    <source>
        <dbReference type="SAM" id="MobiDB-lite"/>
    </source>
</evidence>
<evidence type="ECO:0000269" key="3">
    <source>
    </source>
</evidence>
<evidence type="ECO:0000303" key="4">
    <source>
    </source>
</evidence>
<evidence type="ECO:0000303" key="5">
    <source>
    </source>
</evidence>
<evidence type="ECO:0000303" key="6">
    <source>
    </source>
</evidence>
<evidence type="ECO:0000303" key="7">
    <source ref="2"/>
</evidence>
<evidence type="ECO:0000305" key="8"/>
<evidence type="ECO:0000312" key="9">
    <source>
        <dbReference type="HGNC" id="HGNC:18445"/>
    </source>
</evidence>
<comment type="function">
    <text evidence="3">As part of the intermicrovillar adhesion complex/IMAC plays a role in epithelial brush border differentiation, controlling microvilli organization and length. Acts as a light chain for MYO7B and is required for efficient targeting of the IMAC to the tips of border brush microvilli.</text>
</comment>
<comment type="subunit">
    <text evidence="3">Interacts with MYO7B; the interaction mediates the association of CALML4 with the IMAC/intermicrovillar adhesion complex (PubMed:32209652). Interacts with MYO7A (PubMed:32209652).</text>
</comment>
<comment type="subcellular location">
    <molecule>Isoform 1</molecule>
    <subcellularLocation>
        <location evidence="3">Cell projection</location>
        <location evidence="3">Microvillus</location>
    </subcellularLocation>
    <text evidence="3">Enriched at the distal tips of enterocyte microvilli.</text>
</comment>
<comment type="subcellular location">
    <molecule>Isoform 6</molecule>
    <subcellularLocation>
        <location evidence="3">Cell projection</location>
        <location evidence="3">Microvillus</location>
    </subcellularLocation>
    <text evidence="3">Enriched at the distal tips of enterocyte microvilli.</text>
</comment>
<comment type="alternative products">
    <event type="alternative splicing"/>
    <isoform>
        <id>Q96GE6-1</id>
        <name>1</name>
        <name evidence="6">Long</name>
        <sequence type="displayed"/>
    </isoform>
    <isoform>
        <id>Q96GE6-2</id>
        <name>2</name>
        <sequence type="described" ref="VSP_030436"/>
    </isoform>
    <isoform>
        <id>Q96GE6-3</id>
        <name>3</name>
        <sequence type="described" ref="VSP_030435"/>
    </isoform>
    <isoform>
        <id>Q96GE6-4</id>
        <name>4</name>
        <sequence type="described" ref="VSP_047150"/>
    </isoform>
    <isoform>
        <id>Q96GE6-5</id>
        <name>5</name>
        <sequence type="described" ref="VSP_055513 VSP_055514"/>
    </isoform>
    <isoform>
        <id>Q96GE6-6</id>
        <name>6</name>
        <name evidence="6">Short</name>
        <sequence type="described" ref="VSP_062262"/>
    </isoform>
</comment>
<comment type="tissue specificity">
    <molecule>Isoform 1</molecule>
    <text evidence="3">Expressed in the intestinal tract.</text>
</comment>
<comment type="tissue specificity">
    <molecule>Isoform 6</molecule>
    <text evidence="3">Dominant transcript in the intestinal tract.</text>
</comment>
<comment type="similarity">
    <text evidence="8">Belongs to the calmodulin family.</text>
</comment>
<comment type="sequence caution" evidence="8">
    <conflict type="frameshift">
        <sequence resource="EMBL-CDS" id="AAG48255"/>
    </conflict>
</comment>
<comment type="sequence caution" evidence="8">
    <conflict type="erroneous initiation">
        <sequence resource="EMBL-CDS" id="BAG59377"/>
    </conflict>
    <text>Truncated N-terminus.</text>
</comment>
<protein>
    <recommendedName>
        <fullName evidence="8">Calmodulin-like protein 4</fullName>
    </recommendedName>
    <alternativeName>
        <fullName>Serologically defined breast cancer antigen NY-BR-20</fullName>
    </alternativeName>
</protein>
<feature type="chain" id="PRO_0000314933" description="Calmodulin-like protein 4">
    <location>
        <begin position="1"/>
        <end position="196"/>
    </location>
</feature>
<feature type="domain" description="EF-hand 1" evidence="1">
    <location>
        <begin position="51"/>
        <end position="86"/>
    </location>
</feature>
<feature type="domain" description="EF-hand 2" evidence="1">
    <location>
        <begin position="87"/>
        <end position="122"/>
    </location>
</feature>
<feature type="domain" description="EF-hand 3" evidence="1">
    <location>
        <begin position="124"/>
        <end position="159"/>
    </location>
</feature>
<feature type="domain" description="EF-hand 4" evidence="1">
    <location>
        <begin position="160"/>
        <end position="195"/>
    </location>
</feature>
<feature type="region of interest" description="Disordered" evidence="2">
    <location>
        <begin position="1"/>
        <end position="43"/>
    </location>
</feature>
<feature type="compositionally biased region" description="Basic and acidic residues" evidence="2">
    <location>
        <begin position="17"/>
        <end position="27"/>
    </location>
</feature>
<feature type="compositionally biased region" description="Polar residues" evidence="2">
    <location>
        <begin position="29"/>
        <end position="39"/>
    </location>
</feature>
<feature type="splice variant" id="VSP_030435" description="In isoform 3." evidence="5">
    <location>
        <begin position="1"/>
        <end position="115"/>
    </location>
</feature>
<feature type="splice variant" id="VSP_030436" description="In isoform 2." evidence="4 7">
    <location>
        <begin position="1"/>
        <end position="76"/>
    </location>
</feature>
<feature type="splice variant" id="VSP_062262" description="In isoform 6.">
    <location>
        <begin position="1"/>
        <end position="43"/>
    </location>
</feature>
<feature type="splice variant" id="VSP_055513" description="In isoform 5." evidence="5">
    <original>AKFLSQDQINEYKEC</original>
    <variation>WMISSGKQISNPMAK</variation>
    <location>
        <begin position="45"/>
        <end position="59"/>
    </location>
</feature>
<feature type="splice variant" id="VSP_047150" description="In isoform 4." evidence="8">
    <location>
        <begin position="55"/>
        <end position="101"/>
    </location>
</feature>
<feature type="splice variant" id="VSP_055514" description="In isoform 5." evidence="5">
    <location>
        <begin position="60"/>
        <end position="196"/>
    </location>
</feature>
<feature type="sequence variant" id="VAR_048586" description="In dbSNP:rs3803381.">
    <original>R</original>
    <variation>C</variation>
    <location>
        <position position="28"/>
    </location>
</feature>
<feature type="sequence variant" id="VAR_048587" description="In dbSNP:rs2280217.">
    <original>T</original>
    <variation>K</variation>
    <location>
        <position position="154"/>
    </location>
</feature>
<feature type="sequence conflict" description="In Ref. 1; AAG48255." evidence="8" ref="1">
    <original>R</original>
    <variation>G</variation>
    <location>
        <position position="40"/>
    </location>
</feature>
<feature type="sequence conflict" description="In Ref. 1; AAG48255." evidence="8" ref="1">
    <original>F</original>
    <variation>S</variation>
    <location>
        <position position="60"/>
    </location>
</feature>
<feature type="sequence conflict" description="In Ref. 1; AAG48255." evidence="8" ref="1">
    <original>L</original>
    <variation>F</variation>
    <location>
        <position position="76"/>
    </location>
</feature>
<proteinExistence type="evidence at protein level"/>
<dbReference type="EMBL" id="AF308287">
    <property type="protein sequence ID" value="AAG48255.1"/>
    <property type="status" value="ALT_SEQ"/>
    <property type="molecule type" value="mRNA"/>
</dbReference>
<dbReference type="EMBL" id="CR598967">
    <property type="status" value="NOT_ANNOTATED_CDS"/>
    <property type="molecule type" value="mRNA"/>
</dbReference>
<dbReference type="EMBL" id="BX640702">
    <property type="protein sequence ID" value="CAE45822.1"/>
    <property type="molecule type" value="mRNA"/>
</dbReference>
<dbReference type="EMBL" id="BX640817">
    <property type="protein sequence ID" value="CAE45894.1"/>
    <property type="molecule type" value="mRNA"/>
</dbReference>
<dbReference type="EMBL" id="AC107871">
    <property type="status" value="NOT_ANNOTATED_CDS"/>
    <property type="molecule type" value="Genomic_DNA"/>
</dbReference>
<dbReference type="EMBL" id="CH471082">
    <property type="protein sequence ID" value="EAW77810.1"/>
    <property type="molecule type" value="Genomic_DNA"/>
</dbReference>
<dbReference type="EMBL" id="BC009516">
    <property type="status" value="NOT_ANNOTATED_CDS"/>
    <property type="molecule type" value="mRNA"/>
</dbReference>
<dbReference type="EMBL" id="AK296804">
    <property type="protein sequence ID" value="BAG59377.1"/>
    <property type="status" value="ALT_INIT"/>
    <property type="molecule type" value="mRNA"/>
</dbReference>
<dbReference type="CCDS" id="CCDS10226.3">
    <molecule id="Q96GE6-6"/>
</dbReference>
<dbReference type="CCDS" id="CCDS66808.1">
    <molecule id="Q96GE6-2"/>
</dbReference>
<dbReference type="CCDS" id="CCDS92031.1">
    <molecule id="Q96GE6-3"/>
</dbReference>
<dbReference type="RefSeq" id="NP_001026903.2">
    <property type="nucleotide sequence ID" value="NM_001031733.2"/>
</dbReference>
<dbReference type="RefSeq" id="NP_001273623.1">
    <molecule id="Q96GE6-2"/>
    <property type="nucleotide sequence ID" value="NM_001286694.1"/>
</dbReference>
<dbReference type="RefSeq" id="NP_001273624.1">
    <molecule id="Q96GE6-3"/>
    <property type="nucleotide sequence ID" value="NM_001286695.1"/>
</dbReference>
<dbReference type="RefSeq" id="NP_219501.3">
    <molecule id="Q96GE6-6"/>
    <property type="nucleotide sequence ID" value="NM_033429.3"/>
</dbReference>
<dbReference type="SMR" id="Q96GE6"/>
<dbReference type="BioGRID" id="124886">
    <property type="interactions" value="4"/>
</dbReference>
<dbReference type="FunCoup" id="Q96GE6">
    <property type="interactions" value="1659"/>
</dbReference>
<dbReference type="IntAct" id="Q96GE6">
    <property type="interactions" value="1"/>
</dbReference>
<dbReference type="STRING" id="9606.ENSP00000419081"/>
<dbReference type="GlyGen" id="Q96GE6">
    <property type="glycosylation" value="1 site"/>
</dbReference>
<dbReference type="iPTMnet" id="Q96GE6"/>
<dbReference type="PhosphoSitePlus" id="Q96GE6"/>
<dbReference type="BioMuta" id="CALML4"/>
<dbReference type="DMDM" id="209572745"/>
<dbReference type="jPOST" id="Q96GE6"/>
<dbReference type="MassIVE" id="Q96GE6"/>
<dbReference type="PaxDb" id="9606-ENSP00000419081"/>
<dbReference type="PeptideAtlas" id="Q96GE6"/>
<dbReference type="ProteomicsDB" id="29855"/>
<dbReference type="ProteomicsDB" id="76627">
    <molecule id="Q96GE6-1"/>
</dbReference>
<dbReference type="ProteomicsDB" id="76628">
    <molecule id="Q96GE6-2"/>
</dbReference>
<dbReference type="ProteomicsDB" id="76629">
    <molecule id="Q96GE6-3"/>
</dbReference>
<dbReference type="Antibodypedia" id="42938">
    <property type="antibodies" value="127 antibodies from 20 providers"/>
</dbReference>
<dbReference type="DNASU" id="91860"/>
<dbReference type="Ensembl" id="ENST00000395463.3">
    <molecule id="Q96GE6-2"/>
    <property type="protein sequence ID" value="ENSP00000435285.2"/>
    <property type="gene ID" value="ENSG00000129007.16"/>
</dbReference>
<dbReference type="Ensembl" id="ENST00000467889.3">
    <molecule id="Q96GE6-6"/>
    <property type="protein sequence ID" value="ENSP00000419081.2"/>
    <property type="gene ID" value="ENSG00000129007.16"/>
</dbReference>
<dbReference type="Ensembl" id="ENST00000540479.6">
    <molecule id="Q96GE6-3"/>
    <property type="protein sequence ID" value="ENSP00000438177.2"/>
    <property type="gene ID" value="ENSG00000129007.16"/>
</dbReference>
<dbReference type="GeneID" id="91860"/>
<dbReference type="KEGG" id="hsa:91860"/>
<dbReference type="MANE-Select" id="ENST00000467889.3">
    <molecule id="Q96GE6-6"/>
    <property type="protein sequence ID" value="ENSP00000419081.2"/>
    <property type="RefSeq nucleotide sequence ID" value="NM_033429.3"/>
    <property type="RefSeq protein sequence ID" value="NP_219501.3"/>
</dbReference>
<dbReference type="UCSC" id="uc002arb.4">
    <molecule id="Q96GE6-1"/>
    <property type="organism name" value="human"/>
</dbReference>
<dbReference type="AGR" id="HGNC:18445"/>
<dbReference type="CTD" id="91860"/>
<dbReference type="DisGeNET" id="91860"/>
<dbReference type="GeneCards" id="CALML4"/>
<dbReference type="HGNC" id="HGNC:18445">
    <property type="gene designation" value="CALML4"/>
</dbReference>
<dbReference type="HPA" id="ENSG00000129007">
    <property type="expression patterns" value="Tissue enhanced (choroid plexus, intestine)"/>
</dbReference>
<dbReference type="MIM" id="620520">
    <property type="type" value="gene"/>
</dbReference>
<dbReference type="neXtProt" id="NX_Q96GE6"/>
<dbReference type="OpenTargets" id="ENSG00000129007"/>
<dbReference type="PharmGKB" id="PA134903345"/>
<dbReference type="VEuPathDB" id="HostDB:ENSG00000129007"/>
<dbReference type="eggNOG" id="KOG0027">
    <property type="taxonomic scope" value="Eukaryota"/>
</dbReference>
<dbReference type="GeneTree" id="ENSGT00940000157859"/>
<dbReference type="HOGENOM" id="CLU_2995949_0_0_1"/>
<dbReference type="InParanoid" id="Q96GE6"/>
<dbReference type="OMA" id="NYEAFTQ"/>
<dbReference type="OrthoDB" id="435273at2759"/>
<dbReference type="PAN-GO" id="Q96GE6">
    <property type="GO annotations" value="2 GO annotations based on evolutionary models"/>
</dbReference>
<dbReference type="PhylomeDB" id="Q96GE6"/>
<dbReference type="TreeFam" id="TF300912"/>
<dbReference type="PathwayCommons" id="Q96GE6"/>
<dbReference type="BioGRID-ORCS" id="91860">
    <property type="hits" value="7 hits in 1152 CRISPR screens"/>
</dbReference>
<dbReference type="ChiTaRS" id="CALML4">
    <property type="organism name" value="human"/>
</dbReference>
<dbReference type="GenomeRNAi" id="91860"/>
<dbReference type="Pharos" id="Q96GE6">
    <property type="development level" value="Tdark"/>
</dbReference>
<dbReference type="PRO" id="PR:Q96GE6"/>
<dbReference type="Proteomes" id="UP000005640">
    <property type="component" value="Chromosome 15"/>
</dbReference>
<dbReference type="RNAct" id="Q96GE6">
    <property type="molecule type" value="protein"/>
</dbReference>
<dbReference type="Bgee" id="ENSG00000129007">
    <property type="expression patterns" value="Expressed in mucosa of transverse colon and 95 other cell types or tissues"/>
</dbReference>
<dbReference type="ExpressionAtlas" id="Q96GE6">
    <property type="expression patterns" value="baseline and differential"/>
</dbReference>
<dbReference type="GO" id="GO:0005737">
    <property type="term" value="C:cytoplasm"/>
    <property type="evidence" value="ECO:0000318"/>
    <property type="project" value="GO_Central"/>
</dbReference>
<dbReference type="GO" id="GO:0005902">
    <property type="term" value="C:microvillus"/>
    <property type="evidence" value="ECO:0000314"/>
    <property type="project" value="UniProtKB"/>
</dbReference>
<dbReference type="GO" id="GO:0005509">
    <property type="term" value="F:calcium ion binding"/>
    <property type="evidence" value="ECO:0000318"/>
    <property type="project" value="GO_Central"/>
</dbReference>
<dbReference type="GO" id="GO:0030234">
    <property type="term" value="F:enzyme regulator activity"/>
    <property type="evidence" value="ECO:0000318"/>
    <property type="project" value="GO_Central"/>
</dbReference>
<dbReference type="GO" id="GO:0032028">
    <property type="term" value="F:myosin head/neck binding"/>
    <property type="evidence" value="ECO:0000353"/>
    <property type="project" value="UniProtKB"/>
</dbReference>
<dbReference type="GO" id="GO:1904970">
    <property type="term" value="P:brush border assembly"/>
    <property type="evidence" value="ECO:0000314"/>
    <property type="project" value="UniProtKB"/>
</dbReference>
<dbReference type="GO" id="GO:0000226">
    <property type="term" value="P:microtubule cytoskeleton organization"/>
    <property type="evidence" value="ECO:0000318"/>
    <property type="project" value="GO_Central"/>
</dbReference>
<dbReference type="CDD" id="cd00051">
    <property type="entry name" value="EFh"/>
    <property type="match status" value="2"/>
</dbReference>
<dbReference type="FunFam" id="1.10.238.10:FF:000191">
    <property type="entry name" value="Calmodulin like 4"/>
    <property type="match status" value="1"/>
</dbReference>
<dbReference type="Gene3D" id="1.10.238.10">
    <property type="entry name" value="EF-hand"/>
    <property type="match status" value="1"/>
</dbReference>
<dbReference type="InterPro" id="IPR050230">
    <property type="entry name" value="CALM/Myosin/TropC-like"/>
</dbReference>
<dbReference type="InterPro" id="IPR011992">
    <property type="entry name" value="EF-hand-dom_pair"/>
</dbReference>
<dbReference type="InterPro" id="IPR002048">
    <property type="entry name" value="EF_hand_dom"/>
</dbReference>
<dbReference type="PANTHER" id="PTHR23048:SF45">
    <property type="entry name" value="CALMODULIN LIKE 4"/>
    <property type="match status" value="1"/>
</dbReference>
<dbReference type="PANTHER" id="PTHR23048">
    <property type="entry name" value="MYOSIN LIGHT CHAIN 1, 3"/>
    <property type="match status" value="1"/>
</dbReference>
<dbReference type="Pfam" id="PF13499">
    <property type="entry name" value="EF-hand_7"/>
    <property type="match status" value="1"/>
</dbReference>
<dbReference type="SMART" id="SM00054">
    <property type="entry name" value="EFh"/>
    <property type="match status" value="4"/>
</dbReference>
<dbReference type="SUPFAM" id="SSF47473">
    <property type="entry name" value="EF-hand"/>
    <property type="match status" value="1"/>
</dbReference>
<dbReference type="PROSITE" id="PS50222">
    <property type="entry name" value="EF_HAND_2"/>
    <property type="match status" value="4"/>
</dbReference>
<sequence length="196" mass="21883">MAAEHLLPGPPPSLADFRLEAGGKGTERGSGSSKPTGSSRGPRMAKFLSQDQINEYKECFSLYDKQQRGKIKATDLMVAMRCLGASPTPGEVQRHLQTHGIDGNGELDFSTFLTIMHMQIKQEDPKKEILLAMLMVDKEKKGYVMASDLRSKLTSLGEKLTHKEVDDLFREADIEPNGKVKYDEFIHKITLPGRDY</sequence>
<gene>
    <name evidence="9" type="primary">CALML4</name>
</gene>
<name>CALL4_HUMAN</name>